<protein>
    <recommendedName>
        <fullName>Delta-sarcoglycan</fullName>
        <shortName>Delta-SG</shortName>
    </recommendedName>
    <alternativeName>
        <fullName>35 kDa dystrophin-associated glycoprotein</fullName>
        <shortName>35DAG</shortName>
    </alternativeName>
</protein>
<gene>
    <name type="primary">Sgcd</name>
</gene>
<name>SGCD_MOUSE</name>
<organism>
    <name type="scientific">Mus musculus</name>
    <name type="common">Mouse</name>
    <dbReference type="NCBI Taxonomy" id="10090"/>
    <lineage>
        <taxon>Eukaryota</taxon>
        <taxon>Metazoa</taxon>
        <taxon>Chordata</taxon>
        <taxon>Craniata</taxon>
        <taxon>Vertebrata</taxon>
        <taxon>Euteleostomi</taxon>
        <taxon>Mammalia</taxon>
        <taxon>Eutheria</taxon>
        <taxon>Euarchontoglires</taxon>
        <taxon>Glires</taxon>
        <taxon>Rodentia</taxon>
        <taxon>Myomorpha</taxon>
        <taxon>Muroidea</taxon>
        <taxon>Muridae</taxon>
        <taxon>Murinae</taxon>
        <taxon>Mus</taxon>
        <taxon>Mus</taxon>
    </lineage>
</organism>
<evidence type="ECO:0000250" key="1"/>
<evidence type="ECO:0000255" key="2"/>
<evidence type="ECO:0000269" key="3">
    <source>
    </source>
</evidence>
<evidence type="ECO:0000305" key="4"/>
<feature type="chain" id="PRO_0000175247" description="Delta-sarcoglycan">
    <location>
        <begin position="1"/>
        <end position="289"/>
    </location>
</feature>
<feature type="topological domain" description="Cytoplasmic" evidence="2">
    <location>
        <begin position="1"/>
        <end position="37"/>
    </location>
</feature>
<feature type="transmembrane region" description="Helical; Signal-anchor for type II membrane protein" evidence="2">
    <location>
        <begin position="38"/>
        <end position="56"/>
    </location>
</feature>
<feature type="topological domain" description="Extracellular" evidence="2">
    <location>
        <begin position="57"/>
        <end position="289"/>
    </location>
</feature>
<feature type="glycosylation site" description="N-linked (GlcNAc...) asparagine" evidence="2">
    <location>
        <position position="60"/>
    </location>
</feature>
<feature type="glycosylation site" description="N-linked (GlcNAc...) asparagine" evidence="2">
    <location>
        <position position="108"/>
    </location>
</feature>
<feature type="glycosylation site" description="N-linked (GlcNAc...) asparagine" evidence="2">
    <location>
        <position position="284"/>
    </location>
</feature>
<feature type="disulfide bond" evidence="2">
    <location>
        <begin position="263"/>
        <end position="288"/>
    </location>
</feature>
<feature type="disulfide bond" evidence="2">
    <location>
        <begin position="265"/>
        <end position="281"/>
    </location>
</feature>
<dbReference type="EMBL" id="AB024923">
    <property type="protein sequence ID" value="BAA83494.1"/>
    <property type="molecule type" value="mRNA"/>
</dbReference>
<dbReference type="CCDS" id="CCDS24584.1"/>
<dbReference type="RefSeq" id="NP_036021.1">
    <property type="nucleotide sequence ID" value="NM_011891.5"/>
</dbReference>
<dbReference type="RefSeq" id="XP_006533369.1">
    <property type="nucleotide sequence ID" value="XM_006533306.5"/>
</dbReference>
<dbReference type="RefSeq" id="XP_006533370.1">
    <property type="nucleotide sequence ID" value="XM_006533307.4"/>
</dbReference>
<dbReference type="RefSeq" id="XP_036012592.1">
    <property type="nucleotide sequence ID" value="XM_036156699.1"/>
</dbReference>
<dbReference type="RefSeq" id="XP_036012593.1">
    <property type="nucleotide sequence ID" value="XM_036156700.1"/>
</dbReference>
<dbReference type="PDB" id="8YT8">
    <property type="method" value="EM"/>
    <property type="resolution" value="3.50 A"/>
    <property type="chains" value="D=27-289"/>
</dbReference>
<dbReference type="PDBsum" id="8YT8"/>
<dbReference type="EMDB" id="EMD-39568"/>
<dbReference type="SMR" id="P82347"/>
<dbReference type="BioGRID" id="204865">
    <property type="interactions" value="7"/>
</dbReference>
<dbReference type="CORUM" id="P82347"/>
<dbReference type="FunCoup" id="P82347">
    <property type="interactions" value="209"/>
</dbReference>
<dbReference type="IntAct" id="P82347">
    <property type="interactions" value="2"/>
</dbReference>
<dbReference type="STRING" id="10090.ENSMUSP00000076459"/>
<dbReference type="GlyConnect" id="2252">
    <property type="glycosylation" value="1 N-Linked glycan (1 site)"/>
</dbReference>
<dbReference type="GlyCosmos" id="P82347">
    <property type="glycosylation" value="3 sites, 1 glycan"/>
</dbReference>
<dbReference type="GlyGen" id="P82347">
    <property type="glycosylation" value="4 sites, 2 N-linked glycans (1 site), 1 O-linked glycan (1 site)"/>
</dbReference>
<dbReference type="iPTMnet" id="P82347"/>
<dbReference type="PhosphoSitePlus" id="P82347"/>
<dbReference type="SwissPalm" id="P82347"/>
<dbReference type="jPOST" id="P82347"/>
<dbReference type="PaxDb" id="10090-ENSMUSP00000076459"/>
<dbReference type="PeptideAtlas" id="P82347"/>
<dbReference type="ProteomicsDB" id="257215"/>
<dbReference type="Pumba" id="P82347"/>
<dbReference type="Antibodypedia" id="8150">
    <property type="antibodies" value="294 antibodies from 33 providers"/>
</dbReference>
<dbReference type="DNASU" id="24052"/>
<dbReference type="Ensembl" id="ENSMUST00000077221.6">
    <property type="protein sequence ID" value="ENSMUSP00000076459.6"/>
    <property type="gene ID" value="ENSMUSG00000020354.16"/>
</dbReference>
<dbReference type="GeneID" id="24052"/>
<dbReference type="KEGG" id="mmu:24052"/>
<dbReference type="UCSC" id="uc007ioz.1">
    <property type="organism name" value="mouse"/>
</dbReference>
<dbReference type="AGR" id="MGI:1346525"/>
<dbReference type="CTD" id="6444"/>
<dbReference type="MGI" id="MGI:1346525">
    <property type="gene designation" value="Sgcd"/>
</dbReference>
<dbReference type="VEuPathDB" id="HostDB:ENSMUSG00000020354"/>
<dbReference type="eggNOG" id="KOG3950">
    <property type="taxonomic scope" value="Eukaryota"/>
</dbReference>
<dbReference type="GeneTree" id="ENSGT00940000158509"/>
<dbReference type="InParanoid" id="P82347"/>
<dbReference type="OMA" id="CLYCFIC"/>
<dbReference type="OrthoDB" id="5973998at2759"/>
<dbReference type="PhylomeDB" id="P82347"/>
<dbReference type="TreeFam" id="TF313538"/>
<dbReference type="Reactome" id="R-MMU-9913351">
    <property type="pathway name" value="Formation of the dystrophin-glycoprotein complex (DGC)"/>
</dbReference>
<dbReference type="BioGRID-ORCS" id="24052">
    <property type="hits" value="3 hits in 76 CRISPR screens"/>
</dbReference>
<dbReference type="ChiTaRS" id="Sgcd">
    <property type="organism name" value="mouse"/>
</dbReference>
<dbReference type="PRO" id="PR:P82347"/>
<dbReference type="Proteomes" id="UP000000589">
    <property type="component" value="Chromosome 11"/>
</dbReference>
<dbReference type="RNAct" id="P82347">
    <property type="molecule type" value="protein"/>
</dbReference>
<dbReference type="Bgee" id="ENSMUSG00000020354">
    <property type="expression patterns" value="Expressed in ascending aorta and 88 other cell types or tissues"/>
</dbReference>
<dbReference type="ExpressionAtlas" id="P82347">
    <property type="expression patterns" value="baseline and differential"/>
</dbReference>
<dbReference type="GO" id="GO:0005856">
    <property type="term" value="C:cytoskeleton"/>
    <property type="evidence" value="ECO:0007669"/>
    <property type="project" value="UniProtKB-SubCell"/>
</dbReference>
<dbReference type="GO" id="GO:0016011">
    <property type="term" value="C:dystroglycan complex"/>
    <property type="evidence" value="ECO:0000314"/>
    <property type="project" value="MGI"/>
</dbReference>
<dbReference type="GO" id="GO:0005886">
    <property type="term" value="C:plasma membrane"/>
    <property type="evidence" value="ECO:0000314"/>
    <property type="project" value="MGI"/>
</dbReference>
<dbReference type="GO" id="GO:0016012">
    <property type="term" value="C:sarcoglycan complex"/>
    <property type="evidence" value="ECO:0000314"/>
    <property type="project" value="MGI"/>
</dbReference>
<dbReference type="GO" id="GO:0042383">
    <property type="term" value="C:sarcolemma"/>
    <property type="evidence" value="ECO:0000314"/>
    <property type="project" value="MGI"/>
</dbReference>
<dbReference type="GO" id="GO:0016529">
    <property type="term" value="C:sarcoplasmic reticulum"/>
    <property type="evidence" value="ECO:0000314"/>
    <property type="project" value="MGI"/>
</dbReference>
<dbReference type="GO" id="GO:0055074">
    <property type="term" value="P:calcium ion homeostasis"/>
    <property type="evidence" value="ECO:0000315"/>
    <property type="project" value="MGI"/>
</dbReference>
<dbReference type="GO" id="GO:0019722">
    <property type="term" value="P:calcium-mediated signaling"/>
    <property type="evidence" value="ECO:0000315"/>
    <property type="project" value="MGI"/>
</dbReference>
<dbReference type="GO" id="GO:0086003">
    <property type="term" value="P:cardiac muscle cell contraction"/>
    <property type="evidence" value="ECO:0000315"/>
    <property type="project" value="MGI"/>
</dbReference>
<dbReference type="GO" id="GO:0055013">
    <property type="term" value="P:cardiac muscle cell development"/>
    <property type="evidence" value="ECO:0000315"/>
    <property type="project" value="MGI"/>
</dbReference>
<dbReference type="GO" id="GO:0060048">
    <property type="term" value="P:cardiac muscle contraction"/>
    <property type="evidence" value="ECO:0000315"/>
    <property type="project" value="MGI"/>
</dbReference>
<dbReference type="GO" id="GO:0060977">
    <property type="term" value="P:coronary vasculature morphogenesis"/>
    <property type="evidence" value="ECO:0000315"/>
    <property type="project" value="MGI"/>
</dbReference>
<dbReference type="GO" id="GO:0003015">
    <property type="term" value="P:heart process"/>
    <property type="evidence" value="ECO:0000315"/>
    <property type="project" value="MGI"/>
</dbReference>
<dbReference type="GO" id="GO:0061024">
    <property type="term" value="P:membrane organization"/>
    <property type="evidence" value="ECO:0000304"/>
    <property type="project" value="MGI"/>
</dbReference>
<dbReference type="GO" id="GO:0031503">
    <property type="term" value="P:protein-containing complex localization"/>
    <property type="evidence" value="ECO:0000315"/>
    <property type="project" value="MGI"/>
</dbReference>
<dbReference type="InterPro" id="IPR006875">
    <property type="entry name" value="Sarcoglycan"/>
</dbReference>
<dbReference type="InterPro" id="IPR039972">
    <property type="entry name" value="Sarcoglycan_gamma/delta/zeta"/>
</dbReference>
<dbReference type="PANTHER" id="PTHR12939:SF6">
    <property type="entry name" value="DELTA-SARCOGLYCAN"/>
    <property type="match status" value="1"/>
</dbReference>
<dbReference type="PANTHER" id="PTHR12939">
    <property type="entry name" value="SARCOGLYCAN"/>
    <property type="match status" value="1"/>
</dbReference>
<dbReference type="Pfam" id="PF04790">
    <property type="entry name" value="Sarcoglycan_1"/>
    <property type="match status" value="1"/>
</dbReference>
<accession>P82347</accession>
<comment type="function">
    <text>Component of the sarcoglycan complex, a subcomplex of the dystrophin-glycoprotein complex which forms a link between the F-actin cytoskeleton and the extracellular matrix.</text>
</comment>
<comment type="subunit">
    <text evidence="1 3">Interacts with FLNC (By similarity). Cross-link to form 2 major subcomplexes: one consisting of SGCB, SGCD and SGCG and the other consisting of SGCB and SGCD. The association between SGCB and SGCG is particularly strong while SGCA is loosely associated with the other sarcoglycans. Interacts with DAG1.</text>
</comment>
<comment type="subcellular location">
    <subcellularLocation>
        <location evidence="3">Cell membrane</location>
        <location evidence="3">Sarcolemma</location>
        <topology evidence="3">Single-pass type II membrane protein</topology>
    </subcellularLocation>
    <subcellularLocation>
        <location evidence="3">Cytoplasm</location>
        <location evidence="3">Cytoskeleton</location>
    </subcellularLocation>
</comment>
<comment type="tissue specificity">
    <text>Most strongly expressed in skeletal and heart muscle. Also detected in proliferating myoblasts.</text>
</comment>
<comment type="PTM">
    <text>Disulfide bonds are present.</text>
</comment>
<comment type="similarity">
    <text evidence="4">Belongs to the sarcoglycan beta/delta/gamma/zeta family.</text>
</comment>
<proteinExistence type="evidence at protein level"/>
<sequence length="289" mass="32133">MPQEQYSHHRSTMPSSEGPHIYKVGIYGWRKRCLYFFVLLLMILILVNLAMTIWILKVMNFTIDGMGNLRITEKGLKLEGDSEFLQPLYAKEIKSRPGNALYFKSARNVTVNILNDQTKVLTQLVTGPKAVEAYGKRFEVKTVSGKLLFSADDSEVVVGAERLRVLGAEGTVFPKSIETPNVRADPFKELRLESPTRSLVMEAPKGVEINAEAGNMEAICRSELRLESKDGEIKLDAAKIKLPRLPRGSYTPTGTRQKVFEVCVCANGRLFLSQAGTGSTCQINTSVCL</sequence>
<keyword id="KW-0002">3D-structure</keyword>
<keyword id="KW-1003">Cell membrane</keyword>
<keyword id="KW-0963">Cytoplasm</keyword>
<keyword id="KW-0206">Cytoskeleton</keyword>
<keyword id="KW-1015">Disulfide bond</keyword>
<keyword id="KW-0325">Glycoprotein</keyword>
<keyword id="KW-0472">Membrane</keyword>
<keyword id="KW-1185">Reference proteome</keyword>
<keyword id="KW-0735">Signal-anchor</keyword>
<keyword id="KW-0812">Transmembrane</keyword>
<keyword id="KW-1133">Transmembrane helix</keyword>
<reference key="1">
    <citation type="journal article" date="1999" name="Biochem. Biophys. Res. Commun.">
        <title>Developmental expression of sarcoglycan gene products in cultured myocytes.</title>
        <authorList>
            <person name="Noguchi S."/>
            <person name="Wakabayashi E."/>
            <person name="Imamura M."/>
            <person name="Yoshida M."/>
            <person name="Ozawa E."/>
        </authorList>
    </citation>
    <scope>NUCLEOTIDE SEQUENCE [MRNA]</scope>
    <source>
        <tissue>Skeletal muscle</tissue>
    </source>
</reference>
<reference key="2">
    <citation type="journal article" date="1998" name="J. Cell Biol.">
        <title>Molecular organization of sarcoglycan complex in mouse myotubes in culture.</title>
        <authorList>
            <person name="Chan Y.-M."/>
            <person name="Boennemann C.G."/>
            <person name="Lidov H.G.W."/>
            <person name="Kunkel L.M."/>
        </authorList>
    </citation>
    <scope>SUBCELLULAR LOCATION</scope>
    <scope>SUBUNIT</scope>
    <scope>DISULFIDE BONDS</scope>
    <scope>INTERACTION WITH DAG1</scope>
</reference>
<reference key="3">
    <citation type="journal article" date="2010" name="Cell">
        <title>A tissue-specific atlas of mouse protein phosphorylation and expression.</title>
        <authorList>
            <person name="Huttlin E.L."/>
            <person name="Jedrychowski M.P."/>
            <person name="Elias J.E."/>
            <person name="Goswami T."/>
            <person name="Rad R."/>
            <person name="Beausoleil S.A."/>
            <person name="Villen J."/>
            <person name="Haas W."/>
            <person name="Sowa M.E."/>
            <person name="Gygi S.P."/>
        </authorList>
    </citation>
    <scope>IDENTIFICATION BY MASS SPECTROMETRY [LARGE SCALE ANALYSIS]</scope>
    <source>
        <tissue>Heart</tissue>
        <tissue>Lung</tissue>
    </source>
</reference>